<reference key="1">
    <citation type="journal article" date="1998" name="DNA Res.">
        <title>Complete sequence and gene organization of the genome of a hyper-thermophilic archaebacterium, Pyrococcus horikoshii OT3.</title>
        <authorList>
            <person name="Kawarabayasi Y."/>
            <person name="Sawada M."/>
            <person name="Horikawa H."/>
            <person name="Haikawa Y."/>
            <person name="Hino Y."/>
            <person name="Yamamoto S."/>
            <person name="Sekine M."/>
            <person name="Baba S."/>
            <person name="Kosugi H."/>
            <person name="Hosoyama A."/>
            <person name="Nagai Y."/>
            <person name="Sakai M."/>
            <person name="Ogura K."/>
            <person name="Otsuka R."/>
            <person name="Nakazawa H."/>
            <person name="Takamiya M."/>
            <person name="Ohfuku Y."/>
            <person name="Funahashi T."/>
            <person name="Tanaka T."/>
            <person name="Kudoh Y."/>
            <person name="Yamazaki J."/>
            <person name="Kushida N."/>
            <person name="Oguchi A."/>
            <person name="Aoki K."/>
            <person name="Yoshizawa T."/>
            <person name="Nakamura Y."/>
            <person name="Robb F.T."/>
            <person name="Horikoshi K."/>
            <person name="Masuchi Y."/>
            <person name="Shizuya H."/>
            <person name="Kikuchi H."/>
        </authorList>
    </citation>
    <scope>NUCLEOTIDE SEQUENCE [LARGE SCALE GENOMIC DNA]</scope>
    <source>
        <strain>ATCC 700860 / DSM 12428 / JCM 9974 / NBRC 100139 / OT-3</strain>
    </source>
</reference>
<reference key="2">
    <citation type="journal article" date="2006" name="J. Biochem.">
        <title>Characterization of the archaeal ribonuclease P proteins from Pyrococcus horikoshii OT3.</title>
        <authorList>
            <person name="Terada A."/>
            <person name="Honda T."/>
            <person name="Fukuhara H."/>
            <person name="Hada K."/>
            <person name="Kimura M."/>
        </authorList>
    </citation>
    <scope>FUNCTION</scope>
    <scope>SUBUNIT</scope>
    <source>
        <strain>ATCC 700860 / DSM 12428 / JCM 9974 / NBRC 100139 / OT-3</strain>
    </source>
</reference>
<reference key="3">
    <citation type="journal article" date="2012" name="Biosci. Biotechnol. Biochem.">
        <title>Thermodynamic analysis of a multifunctional RNA-binding protein, PhoRpp38, in the hyperthermophilic archaeon Pyrococcus horikoshii OT3.</title>
        <authorList>
            <person name="Oshima K."/>
            <person name="Nakashima T."/>
            <person name="Kakuta Y."/>
            <person name="Tsumoto K."/>
            <person name="Kimura M."/>
        </authorList>
    </citation>
    <scope>RNA-BINDING</scope>
    <source>
        <strain>ATCC 700860 / DSM 12428 / JCM 9974 / NBRC 100139 / OT-3</strain>
    </source>
</reference>
<reference key="4">
    <citation type="journal article" date="2006" name="Biochem. Biophys. Res. Commun.">
        <title>A fifth protein subunit Ph1496p elevates the optimum temperature for the ribonuclease P activity from Pyrococcus horikoshii OT3.</title>
        <authorList>
            <person name="Fukuhara H."/>
            <person name="Kifusa M."/>
            <person name="Watanabe M."/>
            <person name="Terada A."/>
            <person name="Honda T."/>
            <person name="Numata T."/>
            <person name="Kakuta Y."/>
            <person name="Kimura M."/>
        </authorList>
    </citation>
    <scope>X-RAY CRYSTALLOGRAPHY (1.9 ANGSTROMS)</scope>
    <scope>PUTATIVE FUNCTION IN RNASE P ACTIVITY</scope>
    <scope>BIOPHYSICOCHEMICAL PROPERTIES</scope>
    <scope>SUBUNIT</scope>
    <scope>RNA-BINDING</scope>
    <source>
        <strain>ATCC 700860 / DSM 12428 / JCM 9974 / NBRC 100139 / OT-3</strain>
    </source>
</reference>
<sequence length="123" mass="13423">MAKPSYVKFEVPKELAEKALQAVEIARDTGKIRKGTNETTKAVERGQAKLVIIAEDVDPEEIVAHLPPLCEEKEIPYIYVPSKKELGAAAGIEVAAASVAIIEPGKARDLVEEIAMKVRELMK</sequence>
<accession>P62009</accession>
<accession>O59165</accession>
<accession>Q9V0W4</accession>
<name>RL7A_PYRHO</name>
<dbReference type="EMBL" id="BA000001">
    <property type="protein sequence ID" value="BAA30604.1"/>
    <property type="status" value="ALT_INIT"/>
    <property type="molecule type" value="Genomic_DNA"/>
</dbReference>
<dbReference type="PIR" id="D71025">
    <property type="entry name" value="D71025"/>
</dbReference>
<dbReference type="RefSeq" id="WP_048053601.1">
    <property type="nucleotide sequence ID" value="NC_000961.1"/>
</dbReference>
<dbReference type="PDB" id="2CZW">
    <property type="method" value="X-ray"/>
    <property type="resolution" value="1.90 A"/>
    <property type="chains" value="A=1-123"/>
</dbReference>
<dbReference type="PDB" id="5DCV">
    <property type="method" value="X-ray"/>
    <property type="resolution" value="3.40 A"/>
    <property type="chains" value="A/C=1-123"/>
</dbReference>
<dbReference type="PDB" id="5XTM">
    <property type="method" value="X-ray"/>
    <property type="resolution" value="2.10 A"/>
    <property type="chains" value="A/C=1-123"/>
</dbReference>
<dbReference type="PDB" id="5Y7M">
    <property type="method" value="X-ray"/>
    <property type="resolution" value="3.10 A"/>
    <property type="chains" value="A/C=1-123"/>
</dbReference>
<dbReference type="PDBsum" id="2CZW"/>
<dbReference type="PDBsum" id="5DCV"/>
<dbReference type="PDBsum" id="5XTM"/>
<dbReference type="PDBsum" id="5Y7M"/>
<dbReference type="SMR" id="P62009"/>
<dbReference type="STRING" id="70601.gene:9378478"/>
<dbReference type="EnsemblBacteria" id="BAA30604">
    <property type="protein sequence ID" value="BAA30604"/>
    <property type="gene ID" value="BAA30604"/>
</dbReference>
<dbReference type="GeneID" id="1443815"/>
<dbReference type="KEGG" id="pho:PH1496"/>
<dbReference type="eggNOG" id="arCOG01751">
    <property type="taxonomic scope" value="Archaea"/>
</dbReference>
<dbReference type="OrthoDB" id="25810at2157"/>
<dbReference type="BRENDA" id="3.1.26.5">
    <property type="organism ID" value="5244"/>
</dbReference>
<dbReference type="EvolutionaryTrace" id="P62009"/>
<dbReference type="Proteomes" id="UP000000752">
    <property type="component" value="Chromosome"/>
</dbReference>
<dbReference type="GO" id="GO:0005737">
    <property type="term" value="C:cytoplasm"/>
    <property type="evidence" value="ECO:0007669"/>
    <property type="project" value="UniProtKB-SubCell"/>
</dbReference>
<dbReference type="GO" id="GO:1990904">
    <property type="term" value="C:ribonucleoprotein complex"/>
    <property type="evidence" value="ECO:0007669"/>
    <property type="project" value="UniProtKB-KW"/>
</dbReference>
<dbReference type="GO" id="GO:0005840">
    <property type="term" value="C:ribosome"/>
    <property type="evidence" value="ECO:0007669"/>
    <property type="project" value="UniProtKB-KW"/>
</dbReference>
<dbReference type="GO" id="GO:0004526">
    <property type="term" value="F:ribonuclease P activity"/>
    <property type="evidence" value="ECO:0000314"/>
    <property type="project" value="UniProtKB"/>
</dbReference>
<dbReference type="GO" id="GO:0019843">
    <property type="term" value="F:rRNA binding"/>
    <property type="evidence" value="ECO:0007669"/>
    <property type="project" value="UniProtKB-KW"/>
</dbReference>
<dbReference type="GO" id="GO:0003735">
    <property type="term" value="F:structural constituent of ribosome"/>
    <property type="evidence" value="ECO:0007669"/>
    <property type="project" value="InterPro"/>
</dbReference>
<dbReference type="GO" id="GO:0042254">
    <property type="term" value="P:ribosome biogenesis"/>
    <property type="evidence" value="ECO:0007669"/>
    <property type="project" value="InterPro"/>
</dbReference>
<dbReference type="GO" id="GO:0006412">
    <property type="term" value="P:translation"/>
    <property type="evidence" value="ECO:0007669"/>
    <property type="project" value="UniProtKB-UniRule"/>
</dbReference>
<dbReference type="GO" id="GO:0001682">
    <property type="term" value="P:tRNA 5'-leader removal"/>
    <property type="evidence" value="ECO:0000314"/>
    <property type="project" value="UniProtKB"/>
</dbReference>
<dbReference type="FunFam" id="3.30.1330.30:FF:000020">
    <property type="entry name" value="50S ribosomal protein L7Ae"/>
    <property type="match status" value="1"/>
</dbReference>
<dbReference type="Gene3D" id="3.30.1330.30">
    <property type="match status" value="1"/>
</dbReference>
<dbReference type="HAMAP" id="MF_00326">
    <property type="entry name" value="Ribosomal_eL8"/>
    <property type="match status" value="1"/>
</dbReference>
<dbReference type="InterPro" id="IPR050257">
    <property type="entry name" value="eL8/uL1-like"/>
</dbReference>
<dbReference type="InterPro" id="IPR029064">
    <property type="entry name" value="Ribosomal_eL30-like_sf"/>
</dbReference>
<dbReference type="InterPro" id="IPR004037">
    <property type="entry name" value="Ribosomal_eL8-like_CS"/>
</dbReference>
<dbReference type="InterPro" id="IPR004038">
    <property type="entry name" value="Ribosomal_eL8/eL30/eS12/Gad45"/>
</dbReference>
<dbReference type="InterPro" id="IPR018492">
    <property type="entry name" value="Ribosomal_eL8/Nhp2"/>
</dbReference>
<dbReference type="InterPro" id="IPR022481">
    <property type="entry name" value="Ribosomal_eL8_arc"/>
</dbReference>
<dbReference type="NCBIfam" id="TIGR03677">
    <property type="entry name" value="eL8_ribo"/>
    <property type="match status" value="1"/>
</dbReference>
<dbReference type="PANTHER" id="PTHR23105">
    <property type="entry name" value="RIBOSOMAL PROTEIN L7AE FAMILY MEMBER"/>
    <property type="match status" value="1"/>
</dbReference>
<dbReference type="Pfam" id="PF01248">
    <property type="entry name" value="Ribosomal_L7Ae"/>
    <property type="match status" value="1"/>
</dbReference>
<dbReference type="PRINTS" id="PR00881">
    <property type="entry name" value="L7ARS6FAMILY"/>
</dbReference>
<dbReference type="PRINTS" id="PR00884">
    <property type="entry name" value="RIBOSOMALHS6"/>
</dbReference>
<dbReference type="SUPFAM" id="SSF55315">
    <property type="entry name" value="L30e-like"/>
    <property type="match status" value="1"/>
</dbReference>
<dbReference type="PROSITE" id="PS01082">
    <property type="entry name" value="RIBOSOMAL_L7AE"/>
    <property type="match status" value="1"/>
</dbReference>
<comment type="function">
    <text evidence="1 4">Multifunctional RNA-binding protein that recognizes the K-turn motif in ribosomal RNA, box H/ACA, box C/D and box C'/D' sRNAs (By similarity). When added to reconstituted ribonuclease P (RNase P) it increases the optimum temperature to that of the partially purified enzyme and causes a 5-fold increase in apparent Vmax. Binds the RNase P catalytic RNA.</text>
</comment>
<comment type="biophysicochemical properties">
    <temperatureDependence>
        <text evidence="3">Optimum temperature is 72-76 degrees Celsius for RNase P reconstituted with this protein as well as protein subunits Rnp1-4.</text>
    </temperatureDependence>
</comment>
<comment type="subunit">
    <text evidence="1 3 4">Part of the 50S ribosomal subunit (By similarity). May be part of the RNase P complex. Reconstituted enzyme missing individual protein subunits is suboptimally active, showing each subunit contributes to optimization of activity.</text>
</comment>
<comment type="subcellular location">
    <subcellularLocation>
        <location evidence="2">Cytoplasm</location>
    </subcellularLocation>
</comment>
<comment type="similarity">
    <text evidence="2">Belongs to the eukaryotic ribosomal protein eL8 family.</text>
</comment>
<comment type="sequence caution" evidence="5">
    <conflict type="erroneous initiation">
        <sequence resource="EMBL-CDS" id="BAA30604"/>
    </conflict>
    <text>Extended N-terminus.</text>
</comment>
<proteinExistence type="evidence at protein level"/>
<keyword id="KW-0002">3D-structure</keyword>
<keyword id="KW-0963">Cytoplasm</keyword>
<keyword id="KW-0687">Ribonucleoprotein</keyword>
<keyword id="KW-0689">Ribosomal protein</keyword>
<keyword id="KW-0694">RNA-binding</keyword>
<keyword id="KW-0699">rRNA-binding</keyword>
<keyword id="KW-0819">tRNA processing</keyword>
<evidence type="ECO:0000250" key="1"/>
<evidence type="ECO:0000255" key="2">
    <source>
        <dbReference type="HAMAP-Rule" id="MF_00326"/>
    </source>
</evidence>
<evidence type="ECO:0000269" key="3">
    <source>
    </source>
</evidence>
<evidence type="ECO:0000269" key="4">
    <source>
    </source>
</evidence>
<evidence type="ECO:0000305" key="5"/>
<evidence type="ECO:0007829" key="6">
    <source>
        <dbReference type="PDB" id="2CZW"/>
    </source>
</evidence>
<gene>
    <name evidence="2" type="primary">rpl7ae</name>
    <name type="ordered locus">PH1496</name>
</gene>
<organism>
    <name type="scientific">Pyrococcus horikoshii (strain ATCC 700860 / DSM 12428 / JCM 9974 / NBRC 100139 / OT-3)</name>
    <dbReference type="NCBI Taxonomy" id="70601"/>
    <lineage>
        <taxon>Archaea</taxon>
        <taxon>Methanobacteriati</taxon>
        <taxon>Methanobacteriota</taxon>
        <taxon>Thermococci</taxon>
        <taxon>Thermococcales</taxon>
        <taxon>Thermococcaceae</taxon>
        <taxon>Pyrococcus</taxon>
    </lineage>
</organism>
<feature type="chain" id="PRO_0000136803" description="Large ribosomal subunit protein eL8">
    <location>
        <begin position="1"/>
        <end position="123"/>
    </location>
</feature>
<feature type="helix" evidence="6">
    <location>
        <begin position="13"/>
        <end position="29"/>
    </location>
</feature>
<feature type="strand" evidence="6">
    <location>
        <begin position="30"/>
        <end position="35"/>
    </location>
</feature>
<feature type="helix" evidence="6">
    <location>
        <begin position="36"/>
        <end position="44"/>
    </location>
</feature>
<feature type="strand" evidence="6">
    <location>
        <begin position="49"/>
        <end position="54"/>
    </location>
</feature>
<feature type="helix" evidence="6">
    <location>
        <begin position="60"/>
        <end position="62"/>
    </location>
</feature>
<feature type="turn" evidence="6">
    <location>
        <begin position="63"/>
        <end position="65"/>
    </location>
</feature>
<feature type="helix" evidence="6">
    <location>
        <begin position="66"/>
        <end position="73"/>
    </location>
</feature>
<feature type="strand" evidence="6">
    <location>
        <begin position="77"/>
        <end position="81"/>
    </location>
</feature>
<feature type="helix" evidence="6">
    <location>
        <begin position="83"/>
        <end position="90"/>
    </location>
</feature>
<feature type="strand" evidence="6">
    <location>
        <begin position="97"/>
        <end position="103"/>
    </location>
</feature>
<feature type="helix" evidence="6">
    <location>
        <begin position="105"/>
        <end position="107"/>
    </location>
</feature>
<feature type="helix" evidence="6">
    <location>
        <begin position="108"/>
        <end position="121"/>
    </location>
</feature>
<protein>
    <recommendedName>
        <fullName evidence="2">Large ribosomal subunit protein eL8</fullName>
    </recommendedName>
    <alternativeName>
        <fullName evidence="5">50S ribosomal protein L7Ae</fullName>
    </alternativeName>
    <alternativeName>
        <fullName>Ribonuclease P protein component Rpp38</fullName>
        <shortName>RNase P component Rpp38</shortName>
    </alternativeName>
    <alternativeName>
        <fullName evidence="2">Ribosomal protein L8e</fullName>
    </alternativeName>
</protein>